<gene>
    <name type="primary">ytlA</name>
    <name type="synonym">ytlB</name>
    <name type="ordered locus">BSU30595</name>
    <name type="ORF">BSU30590/BSU30600</name>
</gene>
<protein>
    <recommendedName>
        <fullName>Putative binding protein YtlA</fullName>
    </recommendedName>
</protein>
<proteinExistence type="inferred from homology"/>
<organism>
    <name type="scientific">Bacillus subtilis (strain 168)</name>
    <dbReference type="NCBI Taxonomy" id="224308"/>
    <lineage>
        <taxon>Bacteria</taxon>
        <taxon>Bacillati</taxon>
        <taxon>Bacillota</taxon>
        <taxon>Bacilli</taxon>
        <taxon>Bacillales</taxon>
        <taxon>Bacillaceae</taxon>
        <taxon>Bacillus</taxon>
    </lineage>
</organism>
<evidence type="ECO:0000255" key="1">
    <source>
        <dbReference type="PROSITE-ProRule" id="PRU00303"/>
    </source>
</evidence>
<evidence type="ECO:0000305" key="2"/>
<comment type="subcellular location">
    <subcellularLocation>
        <location evidence="1">Cell membrane</location>
        <topology evidence="1">Lipid-anchor</topology>
    </subcellularLocation>
</comment>
<comment type="similarity">
    <text evidence="2">Belongs to the bacterial solute-binding protein SsuA/TauA family.</text>
</comment>
<comment type="sequence caution" evidence="2">
    <conflict type="frameshift">
        <sequence resource="EMBL-CDS" id="AAC00375"/>
    </conflict>
</comment>
<comment type="sequence caution" evidence="2">
    <conflict type="frameshift">
        <sequence resource="EMBL-CDS" id="AAC00376"/>
    </conflict>
</comment>
<dbReference type="EMBL" id="AF008220">
    <property type="protein sequence ID" value="AAC00375.1"/>
    <property type="status" value="ALT_FRAME"/>
    <property type="molecule type" value="Genomic_DNA"/>
</dbReference>
<dbReference type="EMBL" id="AF008220">
    <property type="protein sequence ID" value="AAC00376.1"/>
    <property type="status" value="ALT_FRAME"/>
    <property type="molecule type" value="Genomic_DNA"/>
</dbReference>
<dbReference type="EMBL" id="AL009126">
    <property type="protein sequence ID" value="CAB15037.2"/>
    <property type="molecule type" value="Genomic_DNA"/>
</dbReference>
<dbReference type="PIR" id="A69995">
    <property type="entry name" value="A69995"/>
</dbReference>
<dbReference type="PIR" id="B69995">
    <property type="entry name" value="B69995"/>
</dbReference>
<dbReference type="RefSeq" id="NP_390937.2">
    <property type="nucleotide sequence ID" value="NC_000964.3"/>
</dbReference>
<dbReference type="RefSeq" id="WP_003245977.1">
    <property type="nucleotide sequence ID" value="NZ_OZ025638.1"/>
</dbReference>
<dbReference type="SMR" id="C0SP84"/>
<dbReference type="FunCoup" id="C0SP84">
    <property type="interactions" value="1"/>
</dbReference>
<dbReference type="STRING" id="224308.BSU30595"/>
<dbReference type="PaxDb" id="224308-BSU30595"/>
<dbReference type="EnsemblBacteria" id="CAB15037">
    <property type="protein sequence ID" value="CAB15037"/>
    <property type="gene ID" value="BSU_30595"/>
</dbReference>
<dbReference type="GeneID" id="935959"/>
<dbReference type="KEGG" id="bsu:BSU30595"/>
<dbReference type="PATRIC" id="fig|224308.179.peg.3317"/>
<dbReference type="eggNOG" id="COG0715">
    <property type="taxonomic scope" value="Bacteria"/>
</dbReference>
<dbReference type="InParanoid" id="C0SP84"/>
<dbReference type="OrthoDB" id="9802202at2"/>
<dbReference type="PhylomeDB" id="C0SP84"/>
<dbReference type="BioCyc" id="BSUB:BSU30595-MONOMER"/>
<dbReference type="Proteomes" id="UP000001570">
    <property type="component" value="Chromosome"/>
</dbReference>
<dbReference type="GO" id="GO:0005886">
    <property type="term" value="C:plasma membrane"/>
    <property type="evidence" value="ECO:0007669"/>
    <property type="project" value="UniProtKB-SubCell"/>
</dbReference>
<dbReference type="GO" id="GO:0009970">
    <property type="term" value="P:cellular response to sulfate starvation"/>
    <property type="evidence" value="ECO:0000318"/>
    <property type="project" value="GO_Central"/>
</dbReference>
<dbReference type="Gene3D" id="3.40.190.10">
    <property type="entry name" value="Periplasmic binding protein-like II"/>
    <property type="match status" value="2"/>
</dbReference>
<dbReference type="PANTHER" id="PTHR30024">
    <property type="entry name" value="ALIPHATIC SULFONATES-BINDING PROTEIN-RELATED"/>
    <property type="match status" value="1"/>
</dbReference>
<dbReference type="PANTHER" id="PTHR30024:SF47">
    <property type="entry name" value="TAURINE-BINDING PERIPLASMIC PROTEIN"/>
    <property type="match status" value="1"/>
</dbReference>
<dbReference type="Pfam" id="PF13379">
    <property type="entry name" value="NMT1_2"/>
    <property type="match status" value="1"/>
</dbReference>
<dbReference type="SUPFAM" id="SSF53850">
    <property type="entry name" value="Periplasmic binding protein-like II"/>
    <property type="match status" value="1"/>
</dbReference>
<dbReference type="PROSITE" id="PS51257">
    <property type="entry name" value="PROKAR_LIPOPROTEIN"/>
    <property type="match status" value="1"/>
</dbReference>
<sequence length="334" mass="37546">MNRWLRLGFACVGSIFLMFALAACKQEETLTKVKVAEVTHSIFYAPLYVAESKGFFKEEGLDVDVNTTWGGDKTMTSLLSNGSDIALVGSETSIYVEAQGAKDPVINFAQLTQTDGTFLVAREDVEHFDWDQLKGKTFLGQRKGGMPQMVGEYVLNKHKIDPHKDIDLIQNIDFANIANAFASGTGEYVQLFEPQASLFEKKGIGHIVASFGEESGEVPYTTFMAKQSYLKKNEDTAVKFTKAIYKAQQWVENHSAKDITDAIKDEFDDTDPDVIETSIERYKKQHSYSPDPLLNEKEWELLQTIMDKSGELPKHIPYNQLVNKEIAEKVTSEK</sequence>
<reference key="1">
    <citation type="journal article" date="1997" name="Microbiology">
        <title>Sequencing and functional annotation of the Bacillus subtilis genes in the 200 kb rrnB-dnaB region.</title>
        <authorList>
            <person name="Lapidus A."/>
            <person name="Galleron N."/>
            <person name="Sorokin A."/>
            <person name="Ehrlich S.D."/>
        </authorList>
    </citation>
    <scope>NUCLEOTIDE SEQUENCE [GENOMIC DNA]</scope>
    <source>
        <strain>168</strain>
    </source>
</reference>
<reference key="2">
    <citation type="journal article" date="1997" name="Nature">
        <title>The complete genome sequence of the Gram-positive bacterium Bacillus subtilis.</title>
        <authorList>
            <person name="Kunst F."/>
            <person name="Ogasawara N."/>
            <person name="Moszer I."/>
            <person name="Albertini A.M."/>
            <person name="Alloni G."/>
            <person name="Azevedo V."/>
            <person name="Bertero M.G."/>
            <person name="Bessieres P."/>
            <person name="Bolotin A."/>
            <person name="Borchert S."/>
            <person name="Borriss R."/>
            <person name="Boursier L."/>
            <person name="Brans A."/>
            <person name="Braun M."/>
            <person name="Brignell S.C."/>
            <person name="Bron S."/>
            <person name="Brouillet S."/>
            <person name="Bruschi C.V."/>
            <person name="Caldwell B."/>
            <person name="Capuano V."/>
            <person name="Carter N.M."/>
            <person name="Choi S.-K."/>
            <person name="Codani J.-J."/>
            <person name="Connerton I.F."/>
            <person name="Cummings N.J."/>
            <person name="Daniel R.A."/>
            <person name="Denizot F."/>
            <person name="Devine K.M."/>
            <person name="Duesterhoeft A."/>
            <person name="Ehrlich S.D."/>
            <person name="Emmerson P.T."/>
            <person name="Entian K.-D."/>
            <person name="Errington J."/>
            <person name="Fabret C."/>
            <person name="Ferrari E."/>
            <person name="Foulger D."/>
            <person name="Fritz C."/>
            <person name="Fujita M."/>
            <person name="Fujita Y."/>
            <person name="Fuma S."/>
            <person name="Galizzi A."/>
            <person name="Galleron N."/>
            <person name="Ghim S.-Y."/>
            <person name="Glaser P."/>
            <person name="Goffeau A."/>
            <person name="Golightly E.J."/>
            <person name="Grandi G."/>
            <person name="Guiseppi G."/>
            <person name="Guy B.J."/>
            <person name="Haga K."/>
            <person name="Haiech J."/>
            <person name="Harwood C.R."/>
            <person name="Henaut A."/>
            <person name="Hilbert H."/>
            <person name="Holsappel S."/>
            <person name="Hosono S."/>
            <person name="Hullo M.-F."/>
            <person name="Itaya M."/>
            <person name="Jones L.-M."/>
            <person name="Joris B."/>
            <person name="Karamata D."/>
            <person name="Kasahara Y."/>
            <person name="Klaerr-Blanchard M."/>
            <person name="Klein C."/>
            <person name="Kobayashi Y."/>
            <person name="Koetter P."/>
            <person name="Koningstein G."/>
            <person name="Krogh S."/>
            <person name="Kumano M."/>
            <person name="Kurita K."/>
            <person name="Lapidus A."/>
            <person name="Lardinois S."/>
            <person name="Lauber J."/>
            <person name="Lazarevic V."/>
            <person name="Lee S.-M."/>
            <person name="Levine A."/>
            <person name="Liu H."/>
            <person name="Masuda S."/>
            <person name="Mauel C."/>
            <person name="Medigue C."/>
            <person name="Medina N."/>
            <person name="Mellado R.P."/>
            <person name="Mizuno M."/>
            <person name="Moestl D."/>
            <person name="Nakai S."/>
            <person name="Noback M."/>
            <person name="Noone D."/>
            <person name="O'Reilly M."/>
            <person name="Ogawa K."/>
            <person name="Ogiwara A."/>
            <person name="Oudega B."/>
            <person name="Park S.-H."/>
            <person name="Parro V."/>
            <person name="Pohl T.M."/>
            <person name="Portetelle D."/>
            <person name="Porwollik S."/>
            <person name="Prescott A.M."/>
            <person name="Presecan E."/>
            <person name="Pujic P."/>
            <person name="Purnelle B."/>
            <person name="Rapoport G."/>
            <person name="Rey M."/>
            <person name="Reynolds S."/>
            <person name="Rieger M."/>
            <person name="Rivolta C."/>
            <person name="Rocha E."/>
            <person name="Roche B."/>
            <person name="Rose M."/>
            <person name="Sadaie Y."/>
            <person name="Sato T."/>
            <person name="Scanlan E."/>
            <person name="Schleich S."/>
            <person name="Schroeter R."/>
            <person name="Scoffone F."/>
            <person name="Sekiguchi J."/>
            <person name="Sekowska A."/>
            <person name="Seror S.J."/>
            <person name="Serror P."/>
            <person name="Shin B.-S."/>
            <person name="Soldo B."/>
            <person name="Sorokin A."/>
            <person name="Tacconi E."/>
            <person name="Takagi T."/>
            <person name="Takahashi H."/>
            <person name="Takemaru K."/>
            <person name="Takeuchi M."/>
            <person name="Tamakoshi A."/>
            <person name="Tanaka T."/>
            <person name="Terpstra P."/>
            <person name="Tognoni A."/>
            <person name="Tosato V."/>
            <person name="Uchiyama S."/>
            <person name="Vandenbol M."/>
            <person name="Vannier F."/>
            <person name="Vassarotti A."/>
            <person name="Viari A."/>
            <person name="Wambutt R."/>
            <person name="Wedler E."/>
            <person name="Wedler H."/>
            <person name="Weitzenegger T."/>
            <person name="Winters P."/>
            <person name="Wipat A."/>
            <person name="Yamamoto H."/>
            <person name="Yamane K."/>
            <person name="Yasumoto K."/>
            <person name="Yata K."/>
            <person name="Yoshida K."/>
            <person name="Yoshikawa H.-F."/>
            <person name="Zumstein E."/>
            <person name="Yoshikawa H."/>
            <person name="Danchin A."/>
        </authorList>
    </citation>
    <scope>NUCLEOTIDE SEQUENCE [LARGE SCALE GENOMIC DNA]</scope>
    <source>
        <strain>168</strain>
    </source>
</reference>
<reference key="3">
    <citation type="journal article" date="2009" name="Microbiology">
        <title>From a consortium sequence to a unified sequence: the Bacillus subtilis 168 reference genome a decade later.</title>
        <authorList>
            <person name="Barbe V."/>
            <person name="Cruveiller S."/>
            <person name="Kunst F."/>
            <person name="Lenoble P."/>
            <person name="Meurice G."/>
            <person name="Sekowska A."/>
            <person name="Vallenet D."/>
            <person name="Wang T."/>
            <person name="Moszer I."/>
            <person name="Medigue C."/>
            <person name="Danchin A."/>
        </authorList>
    </citation>
    <scope>SEQUENCE REVISION</scope>
</reference>
<name>YTLA_BACSU</name>
<accession>C0SP84</accession>
<accession>O34420</accession>
<accession>O34665</accession>
<accession>Q795P2</accession>
<accession>Q795P3</accession>
<keyword id="KW-1003">Cell membrane</keyword>
<keyword id="KW-0449">Lipoprotein</keyword>
<keyword id="KW-0472">Membrane</keyword>
<keyword id="KW-0564">Palmitate</keyword>
<keyword id="KW-1185">Reference proteome</keyword>
<keyword id="KW-0732">Signal</keyword>
<feature type="signal peptide" evidence="1">
    <location>
        <begin position="1"/>
        <end position="23"/>
    </location>
</feature>
<feature type="chain" id="PRO_0000377722" description="Putative binding protein YtlA">
    <location>
        <begin position="24"/>
        <end position="334"/>
    </location>
</feature>
<feature type="lipid moiety-binding region" description="N-palmitoyl cysteine" evidence="1">
    <location>
        <position position="24"/>
    </location>
</feature>
<feature type="lipid moiety-binding region" description="S-diacylglycerol cysteine" evidence="1">
    <location>
        <position position="24"/>
    </location>
</feature>